<name>SYV_METTP</name>
<feature type="chain" id="PRO_1000022180" description="Valine--tRNA ligase">
    <location>
        <begin position="1"/>
        <end position="855"/>
    </location>
</feature>
<feature type="short sequence motif" description="'HIGH' region">
    <location>
        <begin position="44"/>
        <end position="54"/>
    </location>
</feature>
<feature type="short sequence motif" description="'KMSKS' region">
    <location>
        <begin position="522"/>
        <end position="526"/>
    </location>
</feature>
<feature type="binding site" evidence="1">
    <location>
        <position position="525"/>
    </location>
    <ligand>
        <name>ATP</name>
        <dbReference type="ChEBI" id="CHEBI:30616"/>
    </ligand>
</feature>
<keyword id="KW-0030">Aminoacyl-tRNA synthetase</keyword>
<keyword id="KW-0067">ATP-binding</keyword>
<keyword id="KW-0963">Cytoplasm</keyword>
<keyword id="KW-0436">Ligase</keyword>
<keyword id="KW-0547">Nucleotide-binding</keyword>
<keyword id="KW-0648">Protein biosynthesis</keyword>
<keyword id="KW-1185">Reference proteome</keyword>
<proteinExistence type="inferred from homology"/>
<accession>A0B7C2</accession>
<protein>
    <recommendedName>
        <fullName evidence="1">Valine--tRNA ligase</fullName>
        <ecNumber evidence="1">6.1.1.9</ecNumber>
    </recommendedName>
    <alternativeName>
        <fullName evidence="1">Valyl-tRNA synthetase</fullName>
        <shortName evidence="1">ValRS</shortName>
    </alternativeName>
</protein>
<organism>
    <name type="scientific">Methanothrix thermoacetophila (strain DSM 6194 / JCM 14653 / NBRC 101360 / PT)</name>
    <name type="common">Methanosaeta thermophila</name>
    <dbReference type="NCBI Taxonomy" id="349307"/>
    <lineage>
        <taxon>Archaea</taxon>
        <taxon>Methanobacteriati</taxon>
        <taxon>Methanobacteriota</taxon>
        <taxon>Stenosarchaea group</taxon>
        <taxon>Methanomicrobia</taxon>
        <taxon>Methanotrichales</taxon>
        <taxon>Methanotrichaceae</taxon>
        <taxon>Methanothrix</taxon>
    </lineage>
</organism>
<reference key="1">
    <citation type="submission" date="2006-10" db="EMBL/GenBank/DDBJ databases">
        <title>Complete sequence of Methanosaeta thermophila PT.</title>
        <authorList>
            <consortium name="US DOE Joint Genome Institute"/>
            <person name="Copeland A."/>
            <person name="Lucas S."/>
            <person name="Lapidus A."/>
            <person name="Barry K."/>
            <person name="Detter J.C."/>
            <person name="Glavina del Rio T."/>
            <person name="Hammon N."/>
            <person name="Israni S."/>
            <person name="Pitluck S."/>
            <person name="Chain P."/>
            <person name="Malfatti S."/>
            <person name="Shin M."/>
            <person name="Vergez L."/>
            <person name="Schmutz J."/>
            <person name="Larimer F."/>
            <person name="Land M."/>
            <person name="Hauser L."/>
            <person name="Kyrpides N."/>
            <person name="Kim E."/>
            <person name="Smith K.S."/>
            <person name="Ingram-Smith C."/>
            <person name="Richardson P."/>
        </authorList>
    </citation>
    <scope>NUCLEOTIDE SEQUENCE [LARGE SCALE GENOMIC DNA]</scope>
    <source>
        <strain>DSM 6194 / JCM 14653 / NBRC 101360 / PT</strain>
    </source>
</reference>
<gene>
    <name evidence="1" type="primary">valS</name>
    <name type="ordered locus">Mthe_0807</name>
</gene>
<dbReference type="EC" id="6.1.1.9" evidence="1"/>
<dbReference type="EMBL" id="CP000477">
    <property type="protein sequence ID" value="ABK14596.1"/>
    <property type="molecule type" value="Genomic_DNA"/>
</dbReference>
<dbReference type="SMR" id="A0B7C2"/>
<dbReference type="STRING" id="349307.Mthe_0807"/>
<dbReference type="KEGG" id="mtp:Mthe_0807"/>
<dbReference type="HOGENOM" id="CLU_001493_0_2_2"/>
<dbReference type="Proteomes" id="UP000000674">
    <property type="component" value="Chromosome"/>
</dbReference>
<dbReference type="GO" id="GO:0005829">
    <property type="term" value="C:cytosol"/>
    <property type="evidence" value="ECO:0007669"/>
    <property type="project" value="TreeGrafter"/>
</dbReference>
<dbReference type="GO" id="GO:0002161">
    <property type="term" value="F:aminoacyl-tRNA deacylase activity"/>
    <property type="evidence" value="ECO:0007669"/>
    <property type="project" value="InterPro"/>
</dbReference>
<dbReference type="GO" id="GO:0005524">
    <property type="term" value="F:ATP binding"/>
    <property type="evidence" value="ECO:0007669"/>
    <property type="project" value="UniProtKB-UniRule"/>
</dbReference>
<dbReference type="GO" id="GO:0004832">
    <property type="term" value="F:valine-tRNA ligase activity"/>
    <property type="evidence" value="ECO:0007669"/>
    <property type="project" value="UniProtKB-UniRule"/>
</dbReference>
<dbReference type="GO" id="GO:0006438">
    <property type="term" value="P:valyl-tRNA aminoacylation"/>
    <property type="evidence" value="ECO:0007669"/>
    <property type="project" value="UniProtKB-UniRule"/>
</dbReference>
<dbReference type="CDD" id="cd07962">
    <property type="entry name" value="Anticodon_Ia_Val"/>
    <property type="match status" value="1"/>
</dbReference>
<dbReference type="CDD" id="cd00817">
    <property type="entry name" value="ValRS_core"/>
    <property type="match status" value="1"/>
</dbReference>
<dbReference type="FunFam" id="3.40.50.620:FF:000192">
    <property type="entry name" value="Valine--tRNA ligase"/>
    <property type="match status" value="1"/>
</dbReference>
<dbReference type="FunFam" id="3.40.50.620:FF:000324">
    <property type="entry name" value="Valine--tRNA ligase"/>
    <property type="match status" value="1"/>
</dbReference>
<dbReference type="Gene3D" id="3.40.50.620">
    <property type="entry name" value="HUPs"/>
    <property type="match status" value="2"/>
</dbReference>
<dbReference type="Gene3D" id="1.10.730.10">
    <property type="entry name" value="Isoleucyl-tRNA Synthetase, Domain 1"/>
    <property type="match status" value="1"/>
</dbReference>
<dbReference type="HAMAP" id="MF_02005">
    <property type="entry name" value="Val_tRNA_synth_type2"/>
    <property type="match status" value="1"/>
</dbReference>
<dbReference type="InterPro" id="IPR001412">
    <property type="entry name" value="aa-tRNA-synth_I_CS"/>
</dbReference>
<dbReference type="InterPro" id="IPR002300">
    <property type="entry name" value="aa-tRNA-synth_Ia"/>
</dbReference>
<dbReference type="InterPro" id="IPR033705">
    <property type="entry name" value="Anticodon_Ia_Val"/>
</dbReference>
<dbReference type="InterPro" id="IPR013155">
    <property type="entry name" value="M/V/L/I-tRNA-synth_anticd-bd"/>
</dbReference>
<dbReference type="InterPro" id="IPR014729">
    <property type="entry name" value="Rossmann-like_a/b/a_fold"/>
</dbReference>
<dbReference type="InterPro" id="IPR009080">
    <property type="entry name" value="tRNAsynth_Ia_anticodon-bd"/>
</dbReference>
<dbReference type="InterPro" id="IPR009008">
    <property type="entry name" value="Val/Leu/Ile-tRNA-synth_edit"/>
</dbReference>
<dbReference type="InterPro" id="IPR022874">
    <property type="entry name" value="Valine-tRNA_ligase_type_2"/>
</dbReference>
<dbReference type="InterPro" id="IPR002303">
    <property type="entry name" value="Valyl-tRNA_ligase"/>
</dbReference>
<dbReference type="NCBIfam" id="NF009687">
    <property type="entry name" value="PRK13208.1"/>
    <property type="match status" value="1"/>
</dbReference>
<dbReference type="NCBIfam" id="TIGR00422">
    <property type="entry name" value="valS"/>
    <property type="match status" value="1"/>
</dbReference>
<dbReference type="PANTHER" id="PTHR11946:SF93">
    <property type="entry name" value="VALINE--TRNA LIGASE, CHLOROPLASTIC_MITOCHONDRIAL 2"/>
    <property type="match status" value="1"/>
</dbReference>
<dbReference type="PANTHER" id="PTHR11946">
    <property type="entry name" value="VALYL-TRNA SYNTHETASES"/>
    <property type="match status" value="1"/>
</dbReference>
<dbReference type="Pfam" id="PF08264">
    <property type="entry name" value="Anticodon_1"/>
    <property type="match status" value="1"/>
</dbReference>
<dbReference type="Pfam" id="PF00133">
    <property type="entry name" value="tRNA-synt_1"/>
    <property type="match status" value="1"/>
</dbReference>
<dbReference type="PRINTS" id="PR00986">
    <property type="entry name" value="TRNASYNTHVAL"/>
</dbReference>
<dbReference type="SUPFAM" id="SSF47323">
    <property type="entry name" value="Anticodon-binding domain of a subclass of class I aminoacyl-tRNA synthetases"/>
    <property type="match status" value="1"/>
</dbReference>
<dbReference type="SUPFAM" id="SSF52374">
    <property type="entry name" value="Nucleotidylyl transferase"/>
    <property type="match status" value="1"/>
</dbReference>
<dbReference type="SUPFAM" id="SSF50677">
    <property type="entry name" value="ValRS/IleRS/LeuRS editing domain"/>
    <property type="match status" value="1"/>
</dbReference>
<dbReference type="PROSITE" id="PS00178">
    <property type="entry name" value="AA_TRNA_LIGASE_I"/>
    <property type="match status" value="1"/>
</dbReference>
<evidence type="ECO:0000255" key="1">
    <source>
        <dbReference type="HAMAP-Rule" id="MF_02005"/>
    </source>
</evidence>
<comment type="function">
    <text evidence="1">Catalyzes the attachment of valine to tRNA(Val). As ValRS can inadvertently accommodate and process structurally similar amino acids such as threonine, to avoid such errors, it has a 'posttransfer' editing activity that hydrolyzes mischarged Thr-tRNA(Val) in a tRNA-dependent manner.</text>
</comment>
<comment type="catalytic activity">
    <reaction evidence="1">
        <text>tRNA(Val) + L-valine + ATP = L-valyl-tRNA(Val) + AMP + diphosphate</text>
        <dbReference type="Rhea" id="RHEA:10704"/>
        <dbReference type="Rhea" id="RHEA-COMP:9672"/>
        <dbReference type="Rhea" id="RHEA-COMP:9708"/>
        <dbReference type="ChEBI" id="CHEBI:30616"/>
        <dbReference type="ChEBI" id="CHEBI:33019"/>
        <dbReference type="ChEBI" id="CHEBI:57762"/>
        <dbReference type="ChEBI" id="CHEBI:78442"/>
        <dbReference type="ChEBI" id="CHEBI:78537"/>
        <dbReference type="ChEBI" id="CHEBI:456215"/>
        <dbReference type="EC" id="6.1.1.9"/>
    </reaction>
</comment>
<comment type="subcellular location">
    <subcellularLocation>
        <location evidence="1">Cytoplasm</location>
    </subcellularLocation>
</comment>
<comment type="domain">
    <text evidence="1">ValRS has two distinct active sites: one for aminoacylation and one for editing. The misactivated threonine is translocated from the active site to the editing site.</text>
</comment>
<comment type="similarity">
    <text evidence="1">Belongs to the class-I aminoacyl-tRNA synthetase family. ValS type 2 subfamily.</text>
</comment>
<sequence>MSEISKEYNFKEVEEKWIERWDPSVYYFDWGSEKPQYIIDTPPPYPTGNFHIGNALNWCYIDFVARYKRMRGYNVMFPQGWDCHGLPTEVKVEETYHITKNQVPREEFRRLCEEMTAQAIERMRRTITRLGISTDWSNEYITMKPEYYVKTQRSFVQMYEKGMIYREDHPVNWCPRCATAIAFAEVEYDTRTTTLNYMRFESDHGCLEIATTRPELLPACVAVAVNPNDERHIGFVGKSVKVPLFDYEVPVLSDPAVDPSFGTGVVMICTFGDKQDVRWWVEHKLPLRQAIDREGRLTEIAGKFGGMSITEAKKAIVDEMLSRGIIYRQEPLEQNVGLCWRCKTPIEILSERQWFVRIYPDVIIKTADEIEWVPEHMKLRLKNWTGTMEWDWCISRQRVFATPIPAWYCKRCGEVMVAKEEWLPLDPTKTQPPVSCSCGSNEFEPEEDVLDTWMDSSISALHVTGWLSREDPRYPAQLRPQGHDIIRTWAFYTILRSMALVGVKPWETILINGMVLGEDGRKMSKSLNNFVIPEEVFEKNGADALRQWAALGGSPGSDVMFQWKEIVAASRFQQKLWSIYRFAAPFASDTDAPFTQIDRWLLGELGMLVSKVTDAMEAFQFDEAFRAIRAFTWEVLADDYIEIVKSRLYGPDSDERRAAQATLYRVLDVLCRLMAPFIPFITEEIYTSLTGKSVHTQSWPSLETYTSPEGALIREIAAAIRRYKSERGMALNAPLSGIEIYTELELETFDLRGVANAPIQLRKGQPEIESRAVAVKPVMRFIGPRYKDQAGKIIKKLTSMDPADVERMLASGRVEIEGAEITPEMVEIVRETLSMGEAVDVLRLDRATLLIRRSS</sequence>